<organism>
    <name type="scientific">Dictyoglomus thermophilum (strain ATCC 35947 / DSM 3960 / H-6-12)</name>
    <dbReference type="NCBI Taxonomy" id="309799"/>
    <lineage>
        <taxon>Bacteria</taxon>
        <taxon>Pseudomonadati</taxon>
        <taxon>Dictyoglomota</taxon>
        <taxon>Dictyoglomia</taxon>
        <taxon>Dictyoglomales</taxon>
        <taxon>Dictyoglomaceae</taxon>
        <taxon>Dictyoglomus</taxon>
    </lineage>
</organism>
<dbReference type="EMBL" id="CP001146">
    <property type="protein sequence ID" value="ACI19021.1"/>
    <property type="molecule type" value="Genomic_DNA"/>
</dbReference>
<dbReference type="RefSeq" id="WP_012547653.1">
    <property type="nucleotide sequence ID" value="NC_011297.1"/>
</dbReference>
<dbReference type="SMR" id="B5YDV5"/>
<dbReference type="STRING" id="309799.DICTH_0849"/>
<dbReference type="PaxDb" id="309799-DICTH_0849"/>
<dbReference type="KEGG" id="dth:DICTH_0849"/>
<dbReference type="eggNOG" id="COG0094">
    <property type="taxonomic scope" value="Bacteria"/>
</dbReference>
<dbReference type="HOGENOM" id="CLU_061015_2_1_0"/>
<dbReference type="OrthoDB" id="9806626at2"/>
<dbReference type="Proteomes" id="UP000001733">
    <property type="component" value="Chromosome"/>
</dbReference>
<dbReference type="GO" id="GO:1990904">
    <property type="term" value="C:ribonucleoprotein complex"/>
    <property type="evidence" value="ECO:0007669"/>
    <property type="project" value="UniProtKB-KW"/>
</dbReference>
<dbReference type="GO" id="GO:0005840">
    <property type="term" value="C:ribosome"/>
    <property type="evidence" value="ECO:0007669"/>
    <property type="project" value="UniProtKB-KW"/>
</dbReference>
<dbReference type="GO" id="GO:0019843">
    <property type="term" value="F:rRNA binding"/>
    <property type="evidence" value="ECO:0007669"/>
    <property type="project" value="UniProtKB-UniRule"/>
</dbReference>
<dbReference type="GO" id="GO:0003735">
    <property type="term" value="F:structural constituent of ribosome"/>
    <property type="evidence" value="ECO:0007669"/>
    <property type="project" value="InterPro"/>
</dbReference>
<dbReference type="GO" id="GO:0000049">
    <property type="term" value="F:tRNA binding"/>
    <property type="evidence" value="ECO:0007669"/>
    <property type="project" value="UniProtKB-UniRule"/>
</dbReference>
<dbReference type="GO" id="GO:0006412">
    <property type="term" value="P:translation"/>
    <property type="evidence" value="ECO:0007669"/>
    <property type="project" value="UniProtKB-UniRule"/>
</dbReference>
<dbReference type="FunFam" id="3.30.1440.10:FF:000001">
    <property type="entry name" value="50S ribosomal protein L5"/>
    <property type="match status" value="1"/>
</dbReference>
<dbReference type="Gene3D" id="3.30.1440.10">
    <property type="match status" value="1"/>
</dbReference>
<dbReference type="HAMAP" id="MF_01333_B">
    <property type="entry name" value="Ribosomal_uL5_B"/>
    <property type="match status" value="1"/>
</dbReference>
<dbReference type="InterPro" id="IPR002132">
    <property type="entry name" value="Ribosomal_uL5"/>
</dbReference>
<dbReference type="InterPro" id="IPR020930">
    <property type="entry name" value="Ribosomal_uL5_bac-type"/>
</dbReference>
<dbReference type="InterPro" id="IPR031309">
    <property type="entry name" value="Ribosomal_uL5_C"/>
</dbReference>
<dbReference type="InterPro" id="IPR022803">
    <property type="entry name" value="Ribosomal_uL5_dom_sf"/>
</dbReference>
<dbReference type="InterPro" id="IPR031310">
    <property type="entry name" value="Ribosomal_uL5_N"/>
</dbReference>
<dbReference type="NCBIfam" id="NF000585">
    <property type="entry name" value="PRK00010.1"/>
    <property type="match status" value="1"/>
</dbReference>
<dbReference type="PANTHER" id="PTHR11994">
    <property type="entry name" value="60S RIBOSOMAL PROTEIN L11-RELATED"/>
    <property type="match status" value="1"/>
</dbReference>
<dbReference type="Pfam" id="PF00281">
    <property type="entry name" value="Ribosomal_L5"/>
    <property type="match status" value="1"/>
</dbReference>
<dbReference type="Pfam" id="PF00673">
    <property type="entry name" value="Ribosomal_L5_C"/>
    <property type="match status" value="1"/>
</dbReference>
<dbReference type="PIRSF" id="PIRSF002161">
    <property type="entry name" value="Ribosomal_L5"/>
    <property type="match status" value="1"/>
</dbReference>
<dbReference type="SUPFAM" id="SSF55282">
    <property type="entry name" value="RL5-like"/>
    <property type="match status" value="1"/>
</dbReference>
<proteinExistence type="inferred from homology"/>
<sequence>MEVLKQKYIQEVVPAMMKKFGYKNPMAVPKIEKIVVNIGVSEAVQNPGAIEAAARDLAIITGQRPIVRKARKSIANFHLRKGMPIGVKVTLRGERMYAFLYKLINLALPRVRDFSGVSPNSFDGRGNYSLGLKEQLVFPEIEYDKIDRIRGMDITIVTTAKTDEEAKELLALLGMPFKK</sequence>
<evidence type="ECO:0000255" key="1">
    <source>
        <dbReference type="HAMAP-Rule" id="MF_01333"/>
    </source>
</evidence>
<evidence type="ECO:0000305" key="2"/>
<keyword id="KW-0687">Ribonucleoprotein</keyword>
<keyword id="KW-0689">Ribosomal protein</keyword>
<keyword id="KW-0694">RNA-binding</keyword>
<keyword id="KW-0699">rRNA-binding</keyword>
<keyword id="KW-0820">tRNA-binding</keyword>
<name>RL5_DICT6</name>
<gene>
    <name evidence="1" type="primary">rplE</name>
    <name type="ordered locus">DICTH_0849</name>
</gene>
<comment type="function">
    <text evidence="1">This is one of the proteins that bind and probably mediate the attachment of the 5S RNA into the large ribosomal subunit, where it forms part of the central protuberance. In the 70S ribosome it contacts protein S13 of the 30S subunit (bridge B1b), connecting the 2 subunits; this bridge is implicated in subunit movement. Contacts the P site tRNA; the 5S rRNA and some of its associated proteins might help stabilize positioning of ribosome-bound tRNAs.</text>
</comment>
<comment type="subunit">
    <text evidence="1">Part of the 50S ribosomal subunit; part of the 5S rRNA/L5/L18/L25 subcomplex. Contacts the 5S rRNA and the P site tRNA. Forms a bridge to the 30S subunit in the 70S ribosome.</text>
</comment>
<comment type="similarity">
    <text evidence="1">Belongs to the universal ribosomal protein uL5 family.</text>
</comment>
<protein>
    <recommendedName>
        <fullName evidence="1">Large ribosomal subunit protein uL5</fullName>
    </recommendedName>
    <alternativeName>
        <fullName evidence="2">50S ribosomal protein L5</fullName>
    </alternativeName>
</protein>
<feature type="chain" id="PRO_1000142391" description="Large ribosomal subunit protein uL5">
    <location>
        <begin position="1"/>
        <end position="179"/>
    </location>
</feature>
<reference key="1">
    <citation type="journal article" date="2014" name="Genome Announc.">
        <title>Complete Genome Sequence of the Extreme Thermophile Dictyoglomus thermophilum H-6-12.</title>
        <authorList>
            <person name="Coil D.A."/>
            <person name="Badger J.H."/>
            <person name="Forberger H.C."/>
            <person name="Riggs F."/>
            <person name="Madupu R."/>
            <person name="Fedorova N."/>
            <person name="Ward N."/>
            <person name="Robb F.T."/>
            <person name="Eisen J.A."/>
        </authorList>
    </citation>
    <scope>NUCLEOTIDE SEQUENCE [LARGE SCALE GENOMIC DNA]</scope>
    <source>
        <strain>ATCC 35947 / DSM 3960 / H-6-12</strain>
    </source>
</reference>
<accession>B5YDV5</accession>